<protein>
    <recommendedName>
        <fullName evidence="20">Monocarboxylate transporter 1</fullName>
        <shortName>MCT 1</shortName>
    </recommendedName>
    <alternativeName>
        <fullName>Solute carrier family 16 member 1</fullName>
    </alternativeName>
</protein>
<comment type="function">
    <text evidence="1 2 7 16 17">Bidirectional proton-coupled monocarboxylate transporter (PubMed:12946269, PubMed:32946811, PubMed:33333023). Catalyzes the rapid transport across the plasma membrane of many monocarboxylates such as lactate, pyruvate, acetate and the ketone bodies acetoacetate and beta-hydroxybutyrate, and thus contributes to the maintenance of intracellular pH (PubMed:12946269, PubMed:33333023). The transport direction is determined by the proton motive force and the concentration gradient of the substrate monocarboxylate. MCT1 is a major lactate exporter (By similarity). Plays a role in cellular responses to a high-fat diet by modulating the cellular levels of lactate and pyruvate that contribute to the regulation of central metabolic pathways and insulin secretion, with concomitant effects on plasma insulin levels and blood glucose homeostasis (By similarity). Facilitates the protonated monocarboxylate form of succinate export, that its transient protonation upon muscle cell acidification in exercising muscle and ischemic heart (PubMed:32946811). Functions via alternate outward- and inward-open conformation states. Protonation and deprotonation of 309-Asp is essential for the conformational transition (PubMed:33333023).</text>
</comment>
<comment type="catalytic activity">
    <reaction evidence="7 17">
        <text>(S)-lactate(in) + H(+)(in) = (S)-lactate(out) + H(+)(out)</text>
        <dbReference type="Rhea" id="RHEA:29415"/>
        <dbReference type="ChEBI" id="CHEBI:15378"/>
        <dbReference type="ChEBI" id="CHEBI:16651"/>
    </reaction>
    <physiologicalReaction direction="left-to-right" evidence="22">
        <dbReference type="Rhea" id="RHEA:29416"/>
    </physiologicalReaction>
    <physiologicalReaction direction="right-to-left" evidence="22">
        <dbReference type="Rhea" id="RHEA:29417"/>
    </physiologicalReaction>
</comment>
<comment type="catalytic activity">
    <reaction evidence="7">
        <text>acetate(out) + H(+)(out) = acetate(in) + H(+)(in)</text>
        <dbReference type="Rhea" id="RHEA:71803"/>
        <dbReference type="ChEBI" id="CHEBI:15378"/>
        <dbReference type="ChEBI" id="CHEBI:30089"/>
    </reaction>
    <physiologicalReaction direction="left-to-right" evidence="2">
        <dbReference type="Rhea" id="RHEA:71804"/>
    </physiologicalReaction>
    <physiologicalReaction direction="right-to-left" evidence="2">
        <dbReference type="Rhea" id="RHEA:71805"/>
    </physiologicalReaction>
</comment>
<comment type="catalytic activity">
    <reaction evidence="2">
        <text>acetoacetate(out) + H(+)(out) = acetoacetate(in) + H(+)(in)</text>
        <dbReference type="Rhea" id="RHEA:71775"/>
        <dbReference type="ChEBI" id="CHEBI:13705"/>
        <dbReference type="ChEBI" id="CHEBI:15378"/>
    </reaction>
    <physiologicalReaction direction="left-to-right" evidence="2">
        <dbReference type="Rhea" id="RHEA:71776"/>
    </physiologicalReaction>
    <physiologicalReaction direction="right-to-left" evidence="2">
        <dbReference type="Rhea" id="RHEA:71777"/>
    </physiologicalReaction>
</comment>
<comment type="catalytic activity">
    <reaction evidence="2">
        <text>pyruvate(out) + H(+)(out) = pyruvate(in) + H(+)(in)</text>
        <dbReference type="Rhea" id="RHEA:64720"/>
        <dbReference type="ChEBI" id="CHEBI:15361"/>
        <dbReference type="ChEBI" id="CHEBI:15378"/>
    </reaction>
</comment>
<comment type="catalytic activity">
    <reaction evidence="2">
        <text>(R)-3-hydroxybutanoate(out) + H(+)(out) = (R)-3-hydroxybutanoate(in) + H(+)(in)</text>
        <dbReference type="Rhea" id="RHEA:71795"/>
        <dbReference type="ChEBI" id="CHEBI:10983"/>
        <dbReference type="ChEBI" id="CHEBI:15378"/>
    </reaction>
    <physiologicalReaction direction="left-to-right" evidence="2">
        <dbReference type="Rhea" id="RHEA:71796"/>
    </physiologicalReaction>
    <physiologicalReaction direction="right-to-left" evidence="2">
        <dbReference type="Rhea" id="RHEA:71797"/>
    </physiologicalReaction>
</comment>
<comment type="catalytic activity">
    <reaction evidence="2">
        <text>3-methyl-2-oxobutanoate(out) + H(+)(out) = 3-methyl-2-oxobutanoate(in) + H(+)(in)</text>
        <dbReference type="Rhea" id="RHEA:71783"/>
        <dbReference type="ChEBI" id="CHEBI:11851"/>
        <dbReference type="ChEBI" id="CHEBI:15378"/>
    </reaction>
</comment>
<comment type="catalytic activity">
    <reaction evidence="2">
        <text>4-methyl-2-oxopentanoate(out) + H(+)(out) = 4-methyl-2-oxopentanoate(in) + H(+)(in)</text>
        <dbReference type="Rhea" id="RHEA:71779"/>
        <dbReference type="ChEBI" id="CHEBI:15378"/>
        <dbReference type="ChEBI" id="CHEBI:17865"/>
    </reaction>
</comment>
<comment type="catalytic activity">
    <reaction evidence="16">
        <text>succinate(in) + 2 H(+)(in) = succinate(out) + 2 H(+)(out)</text>
        <dbReference type="Rhea" id="RHEA:29303"/>
        <dbReference type="ChEBI" id="CHEBI:15378"/>
        <dbReference type="ChEBI" id="CHEBI:30031"/>
    </reaction>
    <physiologicalReaction direction="left-to-right" evidence="23">
        <dbReference type="Rhea" id="RHEA:29304"/>
    </physiologicalReaction>
</comment>
<comment type="activity regulation">
    <text evidence="17">Selectively inhibited by AZD3965, that acts as a competitive inhibitor binding to the central channel in the outward open conformation.</text>
</comment>
<comment type="biophysicochemical properties">
    <kinetics>
        <KM evidence="7">5.1 mM for lactate</KM>
    </kinetics>
</comment>
<comment type="subunit">
    <text evidence="2 10 15 17">Interacts with EMB; interaction mediates SLC16A1 targeting to the plasma membrane (By similarity). Interacts with isoform 2 of BSG; interaction mediates SLC16A1 targeting to the plasma membrane (PubMed:17127621, PubMed:25957687, PubMed:33333023).</text>
</comment>
<comment type="interaction">
    <interactant intactId="EBI-25891616">
        <id>P53985-2</id>
    </interactant>
    <interactant intactId="EBI-5280499">
        <id>Q66PJ3-4</id>
        <label>ARL6IP4</label>
    </interactant>
    <organismsDiffer>false</organismsDiffer>
    <experiments>3</experiments>
</comment>
<comment type="interaction">
    <interactant intactId="EBI-25891616">
        <id>P53985-2</id>
    </interactant>
    <interactant intactId="EBI-23669343">
        <id>Q92782-2</id>
        <label>DPF1</label>
    </interactant>
    <organismsDiffer>false</organismsDiffer>
    <experiments>3</experiments>
</comment>
<comment type="interaction">
    <interactant intactId="EBI-25891616">
        <id>P53985-2</id>
    </interactant>
    <interactant intactId="EBI-310749">
        <id>Q9UH65</id>
        <label>SWAP70</label>
    </interactant>
    <organismsDiffer>false</organismsDiffer>
    <experiments>3</experiments>
</comment>
<comment type="subcellular location">
    <subcellularLocation>
        <location evidence="5 7 8 10 13 15">Cell membrane</location>
        <topology evidence="17">Multi-pass membrane protein</topology>
    </subcellularLocation>
    <subcellularLocation>
        <location evidence="2">Basolateral cell membrane</location>
        <topology evidence="17">Multi-pass membrane protein</topology>
    </subcellularLocation>
    <subcellularLocation>
        <location evidence="9">Apical cell membrane</location>
        <topology evidence="2">Multi-pass membrane protein</topology>
    </subcellularLocation>
    <text evidence="5">Expression at the cell surface requires the ancillary proteins BSG and EMB. Binds preferentially to BSG.</text>
</comment>
<comment type="alternative products">
    <event type="alternative splicing"/>
    <isoform>
        <id>P53985-1</id>
        <name>1</name>
        <sequence type="displayed"/>
    </isoform>
    <isoform>
        <id>P53985-2</id>
        <name>2</name>
        <sequence type="described" ref="VSP_056191"/>
    </isoform>
</comment>
<comment type="tissue specificity">
    <text evidence="6 8 9">Widely expressed (PubMed:12115955, PubMed:15505343, PubMed:15901598). Detected in heart and in blood lymphocytes and monocytes (at protein level) (PubMed:15505343).</text>
</comment>
<comment type="disease" evidence="4">
    <disease id="DI-02351">
        <name>Symptomatic deficiency in lactate transport</name>
        <acronym>SDLT</acronym>
        <description>Deficiency of lactate transporter may result in an acidic intracellular environment created by muscle activity with consequent degeneration of muscle and release of myoglobin and creatine kinase. This defect might compromise extreme performance in otherwise healthy individuals.</description>
        <dbReference type="MIM" id="245340"/>
    </disease>
    <text>The disease is caused by variants affecting the gene represented in this entry.</text>
</comment>
<comment type="disease" evidence="11">
    <disease id="DI-01584">
        <name>Hyperinsulinemic hypoglycemia, familial, 7</name>
        <acronym>HHF7</acronym>
        <description>A form of hyperinsulinemic hypoglycemia, a clinically and genetically heterogeneous disorder characterized by inappropriate insulin secretion from the pancreatic beta-cells in the presence of low blood glucose levels. HHF7 features include exercise-induced hyperinsulinism, loss of consciousness due to hypoglycemia, and hypoglycemic seizures. HHF7 inheritance is autosomal dominant.</description>
        <dbReference type="MIM" id="610021"/>
    </disease>
    <text>The disease is caused by variants affecting the gene represented in this entry.</text>
</comment>
<comment type="disease" evidence="14 17">
    <disease id="DI-04263">
        <name>Monocarboxylate transporter 1 deficiency</name>
        <acronym>MCT1D</acronym>
        <description>A metabolic disorder characterized by recurrent ketoacidosis, a pathologic state due to ketone formation exceeding ketone utilization. The clinical consequences of ketoacidosis are vomiting, osmotic diuresis, dehydration, and Kussmaul breathing. The condition may progress to decreased consciousness and, ultimately, death.</description>
        <dbReference type="MIM" id="616095"/>
    </disease>
    <text>The disease is caused by variants affecting the gene represented in this entry.</text>
</comment>
<comment type="miscellaneous">
    <text>Overexpression in pancreatic beta-cells triggers insulin secretion in response to pyruvate, causing hyperinsulemia and hypoglycemia during strenuous exercise.</text>
</comment>
<comment type="similarity">
    <text evidence="21">Belongs to the major facilitator superfamily. Monocarboxylate porter (TC 2.A.1.13) family.</text>
</comment>
<comment type="online information" name="Atlas of Genetics and Cytogenetics in Oncology and Haematology">
    <link uri="https://atlasgeneticsoncology.org/gene/44046/SLC16A1"/>
</comment>
<gene>
    <name evidence="24" type="primary">SLC16A1</name>
    <name type="synonym">MCT1</name>
</gene>
<name>MOT1_HUMAN</name>
<feature type="chain" id="PRO_0000211381" description="Monocarboxylate transporter 1">
    <location>
        <begin position="1"/>
        <end position="500"/>
    </location>
</feature>
<feature type="topological domain" description="Cytoplasmic" evidence="21">
    <location>
        <begin position="1"/>
        <end position="22"/>
    </location>
</feature>
<feature type="transmembrane region" description="Helical; Name=1" evidence="17 27">
    <location>
        <begin position="23"/>
        <end position="44"/>
    </location>
</feature>
<feature type="topological domain" description="Extracellular" evidence="21">
    <location>
        <begin position="45"/>
        <end position="55"/>
    </location>
</feature>
<feature type="transmembrane region" description="Helical; Name=2" evidence="17 27">
    <location>
        <begin position="56"/>
        <end position="80"/>
    </location>
</feature>
<feature type="topological domain" description="Cytoplasmic" evidence="21">
    <location>
        <begin position="81"/>
        <end position="84"/>
    </location>
</feature>
<feature type="transmembrane region" description="Helical; Name=3" evidence="17 27">
    <location>
        <begin position="85"/>
        <end position="105"/>
    </location>
</feature>
<feature type="topological domain" description="Extracellular" evidence="21">
    <location>
        <begin position="106"/>
        <end position="109"/>
    </location>
</feature>
<feature type="transmembrane region" description="Helical; Name=4" evidence="17 27">
    <location>
        <begin position="110"/>
        <end position="132"/>
    </location>
</feature>
<feature type="topological domain" description="Cytoplasmic" evidence="21">
    <location>
        <begin position="133"/>
        <end position="146"/>
    </location>
</feature>
<feature type="transmembrane region" description="Helical; Name=5" evidence="17 27">
    <location>
        <begin position="147"/>
        <end position="169"/>
    </location>
</feature>
<feature type="topological domain" description="Extracellular" evidence="21">
    <location>
        <begin position="170"/>
        <end position="174"/>
    </location>
</feature>
<feature type="transmembrane region" description="Helical; Name=6" evidence="17 27">
    <location>
        <begin position="175"/>
        <end position="194"/>
    </location>
</feature>
<feature type="topological domain" description="Cytoplasmic" evidence="21">
    <location>
        <begin position="195"/>
        <end position="261"/>
    </location>
</feature>
<feature type="transmembrane region" description="Helical; Name=7" evidence="17 27">
    <location>
        <begin position="262"/>
        <end position="288"/>
    </location>
</feature>
<feature type="topological domain" description="Extracellular" evidence="21">
    <location>
        <begin position="289"/>
        <end position="295"/>
    </location>
</feature>
<feature type="transmembrane region" description="Helical; Name=8" evidence="17 27">
    <location>
        <begin position="296"/>
        <end position="317"/>
    </location>
</feature>
<feature type="topological domain" description="Cytoplasmic" evidence="21">
    <location>
        <begin position="318"/>
        <end position="328"/>
    </location>
</feature>
<feature type="transmembrane region" description="Helical; Name=9" evidence="17 27">
    <location>
        <begin position="329"/>
        <end position="349"/>
    </location>
</feature>
<feature type="topological domain" description="Extracellular" evidence="21">
    <location>
        <begin position="350"/>
        <end position="353"/>
    </location>
</feature>
<feature type="transmembrane region" description="Helical; Name=10" evidence="17 27">
    <location>
        <begin position="354"/>
        <end position="375"/>
    </location>
</feature>
<feature type="topological domain" description="Cytoplasmic" evidence="21">
    <location>
        <begin position="376"/>
        <end position="389"/>
    </location>
</feature>
<feature type="transmembrane region" description="Helical; Name=11" evidence="17 27">
    <location>
        <begin position="390"/>
        <end position="410"/>
    </location>
</feature>
<feature type="topological domain" description="Extracellular" evidence="21">
    <location>
        <begin position="411"/>
        <end position="421"/>
    </location>
</feature>
<feature type="transmembrane region" description="Helical; Name=12" evidence="17 27">
    <location>
        <begin position="422"/>
        <end position="443"/>
    </location>
</feature>
<feature type="topological domain" description="Cytoplasmic" evidence="21">
    <location>
        <begin position="444"/>
        <end position="500"/>
    </location>
</feature>
<feature type="region of interest" description="Disordered" evidence="3">
    <location>
        <begin position="454"/>
        <end position="500"/>
    </location>
</feature>
<feature type="compositionally biased region" description="Basic and acidic residues" evidence="3">
    <location>
        <begin position="454"/>
        <end position="465"/>
    </location>
</feature>
<feature type="compositionally biased region" description="Basic and acidic residues" evidence="3">
    <location>
        <begin position="482"/>
        <end position="500"/>
    </location>
</feature>
<feature type="binding site" evidence="17 26">
    <location>
        <position position="38"/>
    </location>
    <ligand>
        <name>(S)-lactate</name>
        <dbReference type="ChEBI" id="CHEBI:16651"/>
    </ligand>
</feature>
<feature type="binding site" evidence="17 25">
    <location>
        <position position="309"/>
    </location>
    <ligand>
        <name>H(+)</name>
        <dbReference type="ChEBI" id="CHEBI:15378"/>
    </ligand>
</feature>
<feature type="binding site" evidence="17 26">
    <location>
        <position position="313"/>
    </location>
    <ligand>
        <name>(S)-lactate</name>
        <dbReference type="ChEBI" id="CHEBI:16651"/>
    </ligand>
</feature>
<feature type="modified residue" description="Phosphoserine" evidence="1">
    <location>
        <position position="210"/>
    </location>
</feature>
<feature type="modified residue" description="Phosphoserine" evidence="30 34 36">
    <location>
        <position position="213"/>
    </location>
</feature>
<feature type="modified residue" description="Phosphothreonine" evidence="1">
    <location>
        <position position="231"/>
    </location>
</feature>
<feature type="modified residue" description="Phosphoserine" evidence="31 32 33 37">
    <location>
        <position position="461"/>
    </location>
</feature>
<feature type="modified residue" description="Phosphothreonine" evidence="36 37">
    <location>
        <position position="466"/>
    </location>
</feature>
<feature type="modified residue" description="Phosphoserine" evidence="31 37 38">
    <location>
        <position position="467"/>
    </location>
</feature>
<feature type="modified residue" description="Phosphoserine" evidence="31 34 36 37">
    <location>
        <position position="483"/>
    </location>
</feature>
<feature type="modified residue" description="Phosphoserine" evidence="30 31 32 34 36 37 38">
    <location>
        <position position="498"/>
    </location>
</feature>
<feature type="splice variant" id="VSP_056191" description="In isoform 2." evidence="19">
    <original>RLNDMYGDYKYTYWACGVVLIISGIYLFIGMGINYRLLAKEQKANEQKKESKEEETSIDVAGKPNEVTKAAESPDQKDTDGGPKEEESPV</original>
    <variation>IVYLPTNVGLLQNKHVRWEC</variation>
    <location>
        <begin position="411"/>
        <end position="500"/>
    </location>
</feature>
<feature type="sequence variant" id="VAR_054804" description="In dbSNP:rs11551867.">
    <original>S</original>
    <variation>G</variation>
    <location>
        <position position="85"/>
    </location>
</feature>
<feature type="sequence variant" id="VAR_010434" description="In SDLT; dbSNP:rs80358222." evidence="4">
    <original>K</original>
    <variation>E</variation>
    <location>
        <position position="204"/>
    </location>
</feature>
<feature type="sequence variant" id="VAR_072428" description="In MCT1D; complete loss of lactate transmembrane transporter activity; dbSNP:rs606231302." evidence="14 17">
    <original>R</original>
    <variation>Q</variation>
    <location>
        <position position="313"/>
    </location>
</feature>
<feature type="sequence variant" id="VAR_010435" description="In SDLT; dbSNP:rs72552271." evidence="4">
    <original>G</original>
    <variation>R</variation>
    <location>
        <position position="472"/>
    </location>
</feature>
<feature type="sequence variant" id="VAR_010436" description="In dbSNP:rs1049434." evidence="4 12 18 30 31 32 34 35 36 37">
    <original>D</original>
    <variation>E</variation>
    <location>
        <position position="490"/>
    </location>
</feature>
<feature type="mutagenesis site" description="Reduces lactate transmembrane transporter activity." evidence="17">
    <original>Y</original>
    <variation>F</variation>
    <location>
        <position position="34"/>
    </location>
</feature>
<feature type="mutagenesis site" description="Complete loss of transport lactate transmembrane transporter activity." evidence="17">
    <original>K</original>
    <variation>A</variation>
    <location>
        <position position="38"/>
    </location>
</feature>
<feature type="mutagenesis site" description="Abolishes binding with AZD3965." evidence="17">
    <original>Y</original>
    <variation>A</variation>
    <location>
        <position position="70"/>
    </location>
</feature>
<feature type="mutagenesis site" description="Does not affect plasma membrane localization." evidence="7">
    <original>R</original>
    <variation>H</variation>
    <location>
        <position position="143"/>
    </location>
</feature>
<feature type="mutagenesis site" description="Abolishes lactate transmembrane transporter activity. Reduces plasma membrane localization." evidence="7">
    <original>R</original>
    <variation>Q</variation>
    <variation>K</variation>
    <location>
        <position position="143"/>
    </location>
</feature>
<feature type="mutagenesis site" description="AZD3965 inhibition is reduced by approximately 2 folds. The affinity for AZD3965 is decreased by 10 folds." evidence="17">
    <original>M</original>
    <variation>A</variation>
    <location>
        <position position="151"/>
    </location>
</feature>
<feature type="mutagenesis site" description="Abolishes lactate transmembrane transporter activity. Abolishes expression at the cell membrane." evidence="7">
    <original>G</original>
    <variation>V</variation>
    <location>
        <position position="153"/>
    </location>
</feature>
<feature type="mutagenesis site" description="Decreases interaction with BSN isoform 2." evidence="17">
    <original>N</original>
    <variation>A</variation>
    <location>
        <position position="187"/>
    </location>
</feature>
<feature type="mutagenesis site" description="AZD3965 does not inhibit lactate transmembrane transporter activity. The affinity for AZD3965 is reduced by 55 folds." evidence="17">
    <original>L</original>
    <variation>P</variation>
    <location>
        <position position="281"/>
    </location>
</feature>
<feature type="mutagenesis site" description="Abolishes binding with AZD3965." evidence="17">
    <original>D</original>
    <variation>A</variation>
    <location>
        <position position="309"/>
    </location>
</feature>
<feature type="mutagenesis site" description="Complete loss of lactate transmembrane transporter activity." evidence="17">
    <original>D</original>
    <variation>N</variation>
    <location>
        <position position="309"/>
    </location>
</feature>
<feature type="mutagenesis site" description="Abolishes binding with AZD3965." evidence="17">
    <original>R</original>
    <variation>A</variation>
    <location>
        <position position="313"/>
    </location>
</feature>
<feature type="mutagenesis site" description="Reduces lactate transmembrane transporter activity." evidence="17">
    <original>F</original>
    <variation>A</variation>
    <location>
        <position position="367"/>
    </location>
</feature>
<feature type="mutagenesis site" description="Abolishes lactate transmembrane transporter activity." evidence="17">
    <original>F</original>
    <variation>Y</variation>
    <location>
        <position position="367"/>
    </location>
</feature>
<feature type="mutagenesis site" description="Reduces lactate transmembrane transporter activity by 50%." evidence="17">
    <original>S</original>
    <variation>A</variation>
    <location>
        <position position="371"/>
    </location>
</feature>
<feature type="mutagenesis site" description="AZD3965 inhibition is reduced by approximately 2 folds. The affinity for AZD3965 is decreased by 10 folds." evidence="17">
    <original>S</original>
    <variation>G</variation>
    <location>
        <position position="371"/>
    </location>
</feature>
<feature type="sequence conflict" description="In Ref. 1; AAC41707." evidence="21" ref="1">
    <original>A</original>
    <variation>T</variation>
    <location>
        <position position="480"/>
    </location>
</feature>
<feature type="helix" evidence="40">
    <location>
        <begin position="18"/>
        <end position="39"/>
    </location>
</feature>
<feature type="helix" evidence="40">
    <location>
        <begin position="41"/>
        <end position="43"/>
    </location>
</feature>
<feature type="helix" evidence="40">
    <location>
        <begin position="44"/>
        <end position="51"/>
    </location>
</feature>
<feature type="helix" evidence="40">
    <location>
        <begin position="55"/>
        <end position="83"/>
    </location>
</feature>
<feature type="helix" evidence="40">
    <location>
        <begin position="86"/>
        <end position="103"/>
    </location>
</feature>
<feature type="helix" evidence="40">
    <location>
        <begin position="109"/>
        <end position="138"/>
    </location>
</feature>
<feature type="strand" evidence="40">
    <location>
        <begin position="140"/>
        <end position="142"/>
    </location>
</feature>
<feature type="helix" evidence="40">
    <location>
        <begin position="143"/>
        <end position="171"/>
    </location>
</feature>
<feature type="helix" evidence="40">
    <location>
        <begin position="174"/>
        <end position="191"/>
    </location>
</feature>
<feature type="helix" evidence="41">
    <location>
        <begin position="255"/>
        <end position="258"/>
    </location>
</feature>
<feature type="helix" evidence="40">
    <location>
        <begin position="263"/>
        <end position="275"/>
    </location>
</feature>
<feature type="helix" evidence="40">
    <location>
        <begin position="279"/>
        <end position="290"/>
    </location>
</feature>
<feature type="helix" evidence="40">
    <location>
        <begin position="297"/>
        <end position="320"/>
    </location>
</feature>
<feature type="turn" evidence="40">
    <location>
        <begin position="323"/>
        <end position="325"/>
    </location>
</feature>
<feature type="helix" evidence="40">
    <location>
        <begin position="326"/>
        <end position="328"/>
    </location>
</feature>
<feature type="helix" evidence="40">
    <location>
        <begin position="331"/>
        <end position="346"/>
    </location>
</feature>
<feature type="helix" evidence="41">
    <location>
        <begin position="347"/>
        <end position="349"/>
    </location>
</feature>
<feature type="strand" evidence="42">
    <location>
        <begin position="351"/>
        <end position="353"/>
    </location>
</feature>
<feature type="helix" evidence="40">
    <location>
        <begin position="354"/>
        <end position="382"/>
    </location>
</feature>
<feature type="strand" evidence="41">
    <location>
        <begin position="384"/>
        <end position="386"/>
    </location>
</feature>
<feature type="helix" evidence="40">
    <location>
        <begin position="387"/>
        <end position="398"/>
    </location>
</feature>
<feature type="helix" evidence="40">
    <location>
        <begin position="401"/>
        <end position="414"/>
    </location>
</feature>
<feature type="strand" evidence="39">
    <location>
        <begin position="416"/>
        <end position="419"/>
    </location>
</feature>
<feature type="turn" evidence="40">
    <location>
        <begin position="420"/>
        <end position="422"/>
    </location>
</feature>
<feature type="helix" evidence="40">
    <location>
        <begin position="423"/>
        <end position="448"/>
    </location>
</feature>
<dbReference type="EMBL" id="L31801">
    <property type="protein sequence ID" value="AAC41707.1"/>
    <property type="molecule type" value="mRNA"/>
</dbReference>
<dbReference type="EMBL" id="AJ438945">
    <property type="protein sequence ID" value="CAD27707.1"/>
    <property type="molecule type" value="Genomic_DNA"/>
</dbReference>
<dbReference type="EMBL" id="AL162079">
    <property type="protein sequence ID" value="CAB82412.1"/>
    <property type="molecule type" value="mRNA"/>
</dbReference>
<dbReference type="EMBL" id="AL158844">
    <property type="status" value="NOT_ANNOTATED_CDS"/>
    <property type="molecule type" value="Genomic_DNA"/>
</dbReference>
<dbReference type="EMBL" id="CH471122">
    <property type="protein sequence ID" value="EAW56552.1"/>
    <property type="molecule type" value="Genomic_DNA"/>
</dbReference>
<dbReference type="EMBL" id="BC026317">
    <property type="protein sequence ID" value="AAH26317.1"/>
    <property type="molecule type" value="mRNA"/>
</dbReference>
<dbReference type="EMBL" id="BC045664">
    <property type="protein sequence ID" value="AAH45664.1"/>
    <property type="molecule type" value="mRNA"/>
</dbReference>
<dbReference type="CCDS" id="CCDS858.1">
    <molecule id="P53985-1"/>
</dbReference>
<dbReference type="PIR" id="A55568">
    <property type="entry name" value="A55568"/>
</dbReference>
<dbReference type="RefSeq" id="NP_001159968.1">
    <molecule id="P53985-1"/>
    <property type="nucleotide sequence ID" value="NM_001166496.2"/>
</dbReference>
<dbReference type="RefSeq" id="NP_003042.3">
    <molecule id="P53985-1"/>
    <property type="nucleotide sequence ID" value="NM_003051.3"/>
</dbReference>
<dbReference type="RefSeq" id="XP_011540328.1">
    <property type="nucleotide sequence ID" value="XM_011542026.2"/>
</dbReference>
<dbReference type="RefSeq" id="XP_011540329.1">
    <property type="nucleotide sequence ID" value="XM_011542027.2"/>
</dbReference>
<dbReference type="RefSeq" id="XP_047284745.1">
    <molecule id="P53985-1"/>
    <property type="nucleotide sequence ID" value="XM_047428789.1"/>
</dbReference>
<dbReference type="RefSeq" id="XP_054187515.1">
    <molecule id="P53985-1"/>
    <property type="nucleotide sequence ID" value="XM_054331540.1"/>
</dbReference>
<dbReference type="PDB" id="6LYY">
    <property type="method" value="EM"/>
    <property type="resolution" value="3.60 A"/>
    <property type="chains" value="A=1-500"/>
</dbReference>
<dbReference type="PDB" id="6LZ0">
    <property type="method" value="EM"/>
    <property type="resolution" value="3.60 A"/>
    <property type="chains" value="A=1-500"/>
</dbReference>
<dbReference type="PDB" id="7CKO">
    <property type="method" value="EM"/>
    <property type="resolution" value="2.95 A"/>
    <property type="chains" value="A=1-500"/>
</dbReference>
<dbReference type="PDB" id="7CKR">
    <property type="method" value="EM"/>
    <property type="resolution" value="3.00 A"/>
    <property type="chains" value="A=1-500"/>
</dbReference>
<dbReference type="PDB" id="7DA5">
    <property type="method" value="EM"/>
    <property type="resolution" value="3.30 A"/>
    <property type="chains" value="A=1-500"/>
</dbReference>
<dbReference type="PDB" id="7YR5">
    <property type="method" value="EM"/>
    <property type="resolution" value="3.63 A"/>
    <property type="chains" value="A=1-500"/>
</dbReference>
<dbReference type="PDBsum" id="6LYY"/>
<dbReference type="PDBsum" id="6LZ0"/>
<dbReference type="PDBsum" id="7CKO"/>
<dbReference type="PDBsum" id="7CKR"/>
<dbReference type="PDBsum" id="7DA5"/>
<dbReference type="PDBsum" id="7YR5"/>
<dbReference type="EMDB" id="EMD-30019"/>
<dbReference type="EMDB" id="EMD-30020"/>
<dbReference type="EMDB" id="EMD-30389"/>
<dbReference type="EMDB" id="EMD-30391"/>
<dbReference type="EMDB" id="EMD-30623"/>
<dbReference type="EMDB" id="EMD-34046"/>
<dbReference type="SMR" id="P53985"/>
<dbReference type="BioGRID" id="112454">
    <property type="interactions" value="211"/>
</dbReference>
<dbReference type="FunCoup" id="P53985">
    <property type="interactions" value="441"/>
</dbReference>
<dbReference type="IntAct" id="P53985">
    <property type="interactions" value="93"/>
</dbReference>
<dbReference type="MINT" id="P53985"/>
<dbReference type="STRING" id="9606.ENSP00000441065"/>
<dbReference type="BindingDB" id="P53985"/>
<dbReference type="ChEMBL" id="CHEMBL4360"/>
<dbReference type="DrugBank" id="DB03166">
    <property type="generic name" value="Acetic acid"/>
</dbReference>
<dbReference type="DrugBank" id="DB01762">
    <property type="generic name" value="Acetoacetic acid"/>
</dbReference>
<dbReference type="DrugBank" id="DB03773">
    <property type="generic name" value="alpha-D-quinovopyranose"/>
</dbReference>
<dbReference type="DrugBank" id="DB04074">
    <property type="generic name" value="alpha-Ketoisovalerate"/>
</dbReference>
<dbReference type="DrugBank" id="DB00345">
    <property type="generic name" value="Aminohippuric acid"/>
</dbReference>
<dbReference type="DrugBank" id="DB00415">
    <property type="generic name" value="Ampicillin"/>
</dbReference>
<dbReference type="DrugBank" id="DB08892">
    <property type="generic name" value="Arbaclofen Placarbil"/>
</dbReference>
<dbReference type="DrugBank" id="DB03793">
    <property type="generic name" value="Benzoic acid"/>
</dbReference>
<dbReference type="DrugBank" id="DB03066">
    <property type="generic name" value="D-Lactic acid"/>
</dbReference>
<dbReference type="DrugBank" id="DB07767">
    <property type="generic name" value="Ferulic acid"/>
</dbReference>
<dbReference type="DrugBank" id="DB00529">
    <property type="generic name" value="Foscarnet"/>
</dbReference>
<dbReference type="DrugBank" id="DB01440">
    <property type="generic name" value="gamma-Hydroxybutyric acid"/>
</dbReference>
<dbReference type="DrugBank" id="DB00142">
    <property type="generic name" value="Glutamic acid"/>
</dbReference>
<dbReference type="DrugBank" id="DB04398">
    <property type="generic name" value="Lactic acid"/>
</dbReference>
<dbReference type="DrugBank" id="DB09338">
    <property type="generic name" value="Mersalyl"/>
</dbReference>
<dbReference type="DrugBank" id="DB00563">
    <property type="generic name" value="Methotrexate"/>
</dbReference>
<dbReference type="DrugBank" id="DB00731">
    <property type="generic name" value="Nateglinide"/>
</dbReference>
<dbReference type="DrugBank" id="DB00627">
    <property type="generic name" value="Niacin"/>
</dbReference>
<dbReference type="DrugBank" id="DB04552">
    <property type="generic name" value="Niflumic acid"/>
</dbReference>
<dbReference type="DrugBank" id="DB00175">
    <property type="generic name" value="Pravastatin"/>
</dbReference>
<dbReference type="DrugBank" id="DB01032">
    <property type="generic name" value="Probenecid"/>
</dbReference>
<dbReference type="DrugBank" id="DB00119">
    <property type="generic name" value="Pyruvic acid"/>
</dbReference>
<dbReference type="DrugBank" id="DB04216">
    <property type="generic name" value="Quercetin"/>
</dbReference>
<dbReference type="DrugBank" id="DB00936">
    <property type="generic name" value="Salicylic acid"/>
</dbReference>
<dbReference type="DrugBank" id="DB04348">
    <property type="generic name" value="Taurocholic acid"/>
</dbReference>
<dbReference type="DrugBank" id="DB00313">
    <property type="generic name" value="Valproic acid"/>
</dbReference>
<dbReference type="GuidetoPHARMACOLOGY" id="988"/>
<dbReference type="TCDB" id="2.A.1.13.1">
    <property type="family name" value="the major facilitator superfamily (mfs)"/>
</dbReference>
<dbReference type="GlyGen" id="P53985">
    <property type="glycosylation" value="1 site, 1 O-linked glycan (1 site)"/>
</dbReference>
<dbReference type="iPTMnet" id="P53985"/>
<dbReference type="PhosphoSitePlus" id="P53985"/>
<dbReference type="SwissPalm" id="P53985"/>
<dbReference type="BioMuta" id="SLC16A1"/>
<dbReference type="DMDM" id="313104214"/>
<dbReference type="jPOST" id="P53985"/>
<dbReference type="MassIVE" id="P53985"/>
<dbReference type="PaxDb" id="9606-ENSP00000441065"/>
<dbReference type="PeptideAtlas" id="P53985"/>
<dbReference type="ProteomicsDB" id="56635">
    <molecule id="P53985-1"/>
</dbReference>
<dbReference type="ProteomicsDB" id="62023"/>
<dbReference type="Pumba" id="P53985"/>
<dbReference type="Antibodypedia" id="4301">
    <property type="antibodies" value="341 antibodies from 37 providers"/>
</dbReference>
<dbReference type="DNASU" id="6566"/>
<dbReference type="Ensembl" id="ENST00000369626.8">
    <molecule id="P53985-1"/>
    <property type="protein sequence ID" value="ENSP00000358640.4"/>
    <property type="gene ID" value="ENSG00000155380.13"/>
</dbReference>
<dbReference type="Ensembl" id="ENST00000429288.2">
    <molecule id="P53985-1"/>
    <property type="protein sequence ID" value="ENSP00000397106.2"/>
    <property type="gene ID" value="ENSG00000155380.13"/>
</dbReference>
<dbReference type="Ensembl" id="ENST00000443580.6">
    <molecule id="P53985-1"/>
    <property type="protein sequence ID" value="ENSP00000399104.2"/>
    <property type="gene ID" value="ENSG00000155380.13"/>
</dbReference>
<dbReference type="Ensembl" id="ENST00000458229.6">
    <molecule id="P53985-1"/>
    <property type="protein sequence ID" value="ENSP00000416167.2"/>
    <property type="gene ID" value="ENSG00000155380.13"/>
</dbReference>
<dbReference type="Ensembl" id="ENST00000538576.5">
    <molecule id="P53985-1"/>
    <property type="protein sequence ID" value="ENSP00000441065.1"/>
    <property type="gene ID" value="ENSG00000155380.13"/>
</dbReference>
<dbReference type="Ensembl" id="ENST00000628110.2">
    <molecule id="P53985-1"/>
    <property type="protein sequence ID" value="ENSP00000485688.1"/>
    <property type="gene ID" value="ENSG00000281917.4"/>
</dbReference>
<dbReference type="Ensembl" id="ENST00000630362.4">
    <molecule id="P53985-1"/>
    <property type="protein sequence ID" value="ENSP00000486000.1"/>
    <property type="gene ID" value="ENSG00000281917.4"/>
</dbReference>
<dbReference type="Ensembl" id="ENST00000679803.1">
    <molecule id="P53985-1"/>
    <property type="protein sequence ID" value="ENSP00000505879.1"/>
    <property type="gene ID" value="ENSG00000155380.13"/>
</dbReference>
<dbReference type="GeneID" id="6566"/>
<dbReference type="KEGG" id="hsa:6566"/>
<dbReference type="MANE-Select" id="ENST00000369626.8">
    <property type="protein sequence ID" value="ENSP00000358640.4"/>
    <property type="RefSeq nucleotide sequence ID" value="NM_003051.4"/>
    <property type="RefSeq protein sequence ID" value="NP_003042.3"/>
</dbReference>
<dbReference type="UCSC" id="uc001ecx.4">
    <molecule id="P53985-1"/>
    <property type="organism name" value="human"/>
</dbReference>
<dbReference type="AGR" id="HGNC:10922"/>
<dbReference type="CTD" id="6566"/>
<dbReference type="DisGeNET" id="6566"/>
<dbReference type="GeneCards" id="SLC16A1"/>
<dbReference type="GeneReviews" id="SLC16A1"/>
<dbReference type="HGNC" id="HGNC:10922">
    <property type="gene designation" value="SLC16A1"/>
</dbReference>
<dbReference type="HPA" id="ENSG00000155380">
    <property type="expression patterns" value="Low tissue specificity"/>
</dbReference>
<dbReference type="MalaCards" id="SLC16A1"/>
<dbReference type="MIM" id="245340">
    <property type="type" value="phenotype"/>
</dbReference>
<dbReference type="MIM" id="600682">
    <property type="type" value="gene"/>
</dbReference>
<dbReference type="MIM" id="610021">
    <property type="type" value="phenotype"/>
</dbReference>
<dbReference type="MIM" id="616095">
    <property type="type" value="phenotype"/>
</dbReference>
<dbReference type="neXtProt" id="NX_P53985"/>
<dbReference type="OpenTargets" id="ENSG00000155380"/>
<dbReference type="Orphanet" id="165991">
    <property type="disease" value="Exercise-induced hyperinsulinism"/>
</dbReference>
<dbReference type="Orphanet" id="438075">
    <property type="disease" value="Ketoacidosis due to monocarboxylate transporter-1 deficiency"/>
</dbReference>
<dbReference type="Orphanet" id="171690">
    <property type="disease" value="Metabolic myopathy due to lactate transporter defect"/>
</dbReference>
<dbReference type="PharmGKB" id="PA35813"/>
<dbReference type="VEuPathDB" id="HostDB:ENSG00000155380"/>
<dbReference type="eggNOG" id="KOG2504">
    <property type="taxonomic scope" value="Eukaryota"/>
</dbReference>
<dbReference type="GeneTree" id="ENSGT00940000154955"/>
<dbReference type="InParanoid" id="P53985"/>
<dbReference type="OMA" id="EWAAFTE"/>
<dbReference type="OrthoDB" id="6499973at2759"/>
<dbReference type="PAN-GO" id="P53985">
    <property type="GO annotations" value="3 GO annotations based on evolutionary models"/>
</dbReference>
<dbReference type="PhylomeDB" id="P53985"/>
<dbReference type="TreeFam" id="TF313792"/>
<dbReference type="BioCyc" id="MetaCyc:ENSG00000155380-MONOMER"/>
<dbReference type="PathwayCommons" id="P53985"/>
<dbReference type="Reactome" id="R-HSA-210991">
    <property type="pathway name" value="Basigin interactions"/>
</dbReference>
<dbReference type="Reactome" id="R-HSA-433692">
    <property type="pathway name" value="Proton-coupled monocarboxylate transport"/>
</dbReference>
<dbReference type="Reactome" id="R-HSA-5619070">
    <property type="pathway name" value="Defective SLC16A1 causes symptomatic deficiency in lactate transport (SDLT)"/>
</dbReference>
<dbReference type="Reactome" id="R-HSA-9749641">
    <property type="pathway name" value="Aspirin ADME"/>
</dbReference>
<dbReference type="SABIO-RK" id="P53985"/>
<dbReference type="SignaLink" id="P53985"/>
<dbReference type="BioGRID-ORCS" id="6566">
    <property type="hits" value="82 hits in 1174 CRISPR screens"/>
</dbReference>
<dbReference type="CD-CODE" id="8C2F96ED">
    <property type="entry name" value="Centrosome"/>
</dbReference>
<dbReference type="ChiTaRS" id="SLC16A1">
    <property type="organism name" value="human"/>
</dbReference>
<dbReference type="GenomeRNAi" id="6566"/>
<dbReference type="Pharos" id="P53985">
    <property type="development level" value="Tchem"/>
</dbReference>
<dbReference type="PRO" id="PR:P53985"/>
<dbReference type="Proteomes" id="UP000005640">
    <property type="component" value="Chromosome 1"/>
</dbReference>
<dbReference type="RNAct" id="P53985">
    <property type="molecule type" value="protein"/>
</dbReference>
<dbReference type="Bgee" id="ENSG00000155380">
    <property type="expression patterns" value="Expressed in mucosa of transverse colon and 105 other cell types or tissues"/>
</dbReference>
<dbReference type="ExpressionAtlas" id="P53985">
    <property type="expression patterns" value="baseline and differential"/>
</dbReference>
<dbReference type="GO" id="GO:0016324">
    <property type="term" value="C:apical plasma membrane"/>
    <property type="evidence" value="ECO:0000314"/>
    <property type="project" value="UniProtKB"/>
</dbReference>
<dbReference type="GO" id="GO:0009925">
    <property type="term" value="C:basal plasma membrane"/>
    <property type="evidence" value="ECO:0000314"/>
    <property type="project" value="ARUK-UCL"/>
</dbReference>
<dbReference type="GO" id="GO:0016323">
    <property type="term" value="C:basolateral plasma membrane"/>
    <property type="evidence" value="ECO:0000250"/>
    <property type="project" value="ARUK-UCL"/>
</dbReference>
<dbReference type="GO" id="GO:0030054">
    <property type="term" value="C:cell junction"/>
    <property type="evidence" value="ECO:0000314"/>
    <property type="project" value="HPA"/>
</dbReference>
<dbReference type="GO" id="GO:0005813">
    <property type="term" value="C:centrosome"/>
    <property type="evidence" value="ECO:0000314"/>
    <property type="project" value="UniProtKB"/>
</dbReference>
<dbReference type="GO" id="GO:0070062">
    <property type="term" value="C:extracellular exosome"/>
    <property type="evidence" value="ECO:0007005"/>
    <property type="project" value="UniProtKB"/>
</dbReference>
<dbReference type="GO" id="GO:0043231">
    <property type="term" value="C:intracellular membrane-bounded organelle"/>
    <property type="evidence" value="ECO:0000314"/>
    <property type="project" value="HPA"/>
</dbReference>
<dbReference type="GO" id="GO:0016328">
    <property type="term" value="C:lateral plasma membrane"/>
    <property type="evidence" value="ECO:0000314"/>
    <property type="project" value="ARUK-UCL"/>
</dbReference>
<dbReference type="GO" id="GO:0016020">
    <property type="term" value="C:membrane"/>
    <property type="evidence" value="ECO:0007005"/>
    <property type="project" value="UniProtKB"/>
</dbReference>
<dbReference type="GO" id="GO:0005886">
    <property type="term" value="C:plasma membrane"/>
    <property type="evidence" value="ECO:0000314"/>
    <property type="project" value="HPA"/>
</dbReference>
<dbReference type="GO" id="GO:0045202">
    <property type="term" value="C:synapse"/>
    <property type="evidence" value="ECO:0007669"/>
    <property type="project" value="Ensembl"/>
</dbReference>
<dbReference type="GO" id="GO:0046943">
    <property type="term" value="F:carboxylic acid transmembrane transporter activity"/>
    <property type="evidence" value="ECO:0000250"/>
    <property type="project" value="ARUK-UCL"/>
</dbReference>
<dbReference type="GO" id="GO:0042802">
    <property type="term" value="F:identical protein binding"/>
    <property type="evidence" value="ECO:0007669"/>
    <property type="project" value="Ensembl"/>
</dbReference>
<dbReference type="GO" id="GO:0015129">
    <property type="term" value="F:lactate transmembrane transporter activity"/>
    <property type="evidence" value="ECO:0000250"/>
    <property type="project" value="ARUK-UCL"/>
</dbReference>
<dbReference type="GO" id="GO:0015650">
    <property type="term" value="F:lactate:proton symporter activity"/>
    <property type="evidence" value="ECO:0000314"/>
    <property type="project" value="UniProtKB"/>
</dbReference>
<dbReference type="GO" id="GO:0015130">
    <property type="term" value="F:mevalonate transmembrane transporter activity"/>
    <property type="evidence" value="ECO:0000304"/>
    <property type="project" value="ProtInc"/>
</dbReference>
<dbReference type="GO" id="GO:0008028">
    <property type="term" value="F:monocarboxylic acid transmembrane transporter activity"/>
    <property type="evidence" value="ECO:0000314"/>
    <property type="project" value="ARUK-UCL"/>
</dbReference>
<dbReference type="GO" id="GO:0015141">
    <property type="term" value="F:succinate transmembrane transporter activity"/>
    <property type="evidence" value="ECO:0000314"/>
    <property type="project" value="UniProtKB"/>
</dbReference>
<dbReference type="GO" id="GO:0051780">
    <property type="term" value="P:behavioral response to nutrient"/>
    <property type="evidence" value="ECO:0007669"/>
    <property type="project" value="Ensembl"/>
</dbReference>
<dbReference type="GO" id="GO:1905039">
    <property type="term" value="P:carboxylic acid transmembrane transport"/>
    <property type="evidence" value="ECO:0000250"/>
    <property type="project" value="ARUK-UCL"/>
</dbReference>
<dbReference type="GO" id="GO:0007098">
    <property type="term" value="P:centrosome cycle"/>
    <property type="evidence" value="ECO:0000315"/>
    <property type="project" value="UniProtKB"/>
</dbReference>
<dbReference type="GO" id="GO:0042593">
    <property type="term" value="P:glucose homeostasis"/>
    <property type="evidence" value="ECO:0007669"/>
    <property type="project" value="Ensembl"/>
</dbReference>
<dbReference type="GO" id="GO:0006629">
    <property type="term" value="P:lipid metabolic process"/>
    <property type="evidence" value="ECO:0007669"/>
    <property type="project" value="Ensembl"/>
</dbReference>
<dbReference type="GO" id="GO:0015728">
    <property type="term" value="P:mevalonate transport"/>
    <property type="evidence" value="ECO:0000304"/>
    <property type="project" value="ProtInc"/>
</dbReference>
<dbReference type="GO" id="GO:0015718">
    <property type="term" value="P:monocarboxylic acid transport"/>
    <property type="evidence" value="ECO:0000314"/>
    <property type="project" value="ARUK-UCL"/>
</dbReference>
<dbReference type="GO" id="GO:0035879">
    <property type="term" value="P:plasma membrane lactate transport"/>
    <property type="evidence" value="ECO:0000250"/>
    <property type="project" value="UniProtKB"/>
</dbReference>
<dbReference type="GO" id="GO:0042867">
    <property type="term" value="P:pyruvate catabolic process"/>
    <property type="evidence" value="ECO:0007669"/>
    <property type="project" value="Ensembl"/>
</dbReference>
<dbReference type="GO" id="GO:1901475">
    <property type="term" value="P:pyruvate transmembrane transport"/>
    <property type="evidence" value="ECO:0007669"/>
    <property type="project" value="Ensembl"/>
</dbReference>
<dbReference type="GO" id="GO:0050796">
    <property type="term" value="P:regulation of insulin secretion"/>
    <property type="evidence" value="ECO:0007669"/>
    <property type="project" value="Ensembl"/>
</dbReference>
<dbReference type="GO" id="GO:0032094">
    <property type="term" value="P:response to food"/>
    <property type="evidence" value="ECO:0007669"/>
    <property type="project" value="Ensembl"/>
</dbReference>
<dbReference type="GO" id="GO:0071422">
    <property type="term" value="P:succinate transmembrane transport"/>
    <property type="evidence" value="ECO:0000314"/>
    <property type="project" value="UniProtKB"/>
</dbReference>
<dbReference type="GO" id="GO:0150104">
    <property type="term" value="P:transport across blood-brain barrier"/>
    <property type="evidence" value="ECO:0000303"/>
    <property type="project" value="ARUK-UCL"/>
</dbReference>
<dbReference type="CDD" id="cd17426">
    <property type="entry name" value="MFS_MCT1"/>
    <property type="match status" value="1"/>
</dbReference>
<dbReference type="FunFam" id="1.20.1250.20:FF:000030">
    <property type="entry name" value="monocarboxylate transporter 1 isoform X1"/>
    <property type="match status" value="1"/>
</dbReference>
<dbReference type="Gene3D" id="1.20.1250.20">
    <property type="entry name" value="MFS general substrate transporter like domains"/>
    <property type="match status" value="1"/>
</dbReference>
<dbReference type="InterPro" id="IPR004743">
    <property type="entry name" value="MCT"/>
</dbReference>
<dbReference type="InterPro" id="IPR011701">
    <property type="entry name" value="MFS"/>
</dbReference>
<dbReference type="InterPro" id="IPR020846">
    <property type="entry name" value="MFS_dom"/>
</dbReference>
<dbReference type="InterPro" id="IPR036259">
    <property type="entry name" value="MFS_trans_sf"/>
</dbReference>
<dbReference type="InterPro" id="IPR050327">
    <property type="entry name" value="Proton-linked_MCT"/>
</dbReference>
<dbReference type="NCBIfam" id="TIGR00892">
    <property type="entry name" value="2A0113"/>
    <property type="match status" value="1"/>
</dbReference>
<dbReference type="PANTHER" id="PTHR11360">
    <property type="entry name" value="MONOCARBOXYLATE TRANSPORTER"/>
    <property type="match status" value="1"/>
</dbReference>
<dbReference type="PANTHER" id="PTHR11360:SF24">
    <property type="entry name" value="MONOCARBOXYLATE TRANSPORTER 1"/>
    <property type="match status" value="1"/>
</dbReference>
<dbReference type="Pfam" id="PF07690">
    <property type="entry name" value="MFS_1"/>
    <property type="match status" value="1"/>
</dbReference>
<dbReference type="SUPFAM" id="SSF103473">
    <property type="entry name" value="MFS general substrate transporter"/>
    <property type="match status" value="1"/>
</dbReference>
<dbReference type="PROSITE" id="PS50850">
    <property type="entry name" value="MFS"/>
    <property type="match status" value="1"/>
</dbReference>
<sequence>MPPAVGGPVGYTPPDGGWGWAVVIGAFISIGFSYAFPKSITVFFKEIEGIFHATTSEVSWISSIMLAVMYGGGPISSILVNKYGSRIVMIVGGCLSGCGLIAASFCNTVQQLYVCIGVIGGLGLAFNLNPALTMIGKYFYKRRPLANGLAMAGSPVFLCTLAPLNQVFFGIFGWRGSFLILGGLLLNCCVAGALMRPIGPKPTKAGKDKSKASLEKAGKSGVKKDLHDANTDLIGRHPKQEKRSVFQTINQFLDLTLFTHRGFLLYLSGNVIMFFGLFAPLVFLSSYGKSQHYSSEKSAFLLSILAFVDMVARPSMGLVANTKPIRPRIQYFFAASVVANGVCHMLAPLSTTYVGFCVYAGFFGFAFGWLSSVLFETLMDLVGPQRFSSAVGLVTIVECCPVLLGPPLLGRLNDMYGDYKYTYWACGVVLIISGIYLFIGMGINYRLLAKEQKANEQKKESKEEETSIDVAGKPNEVTKAAESPDQKDTDGGPKEEESPV</sequence>
<evidence type="ECO:0000250" key="1">
    <source>
        <dbReference type="UniProtKB" id="P53986"/>
    </source>
</evidence>
<evidence type="ECO:0000250" key="2">
    <source>
        <dbReference type="UniProtKB" id="P53987"/>
    </source>
</evidence>
<evidence type="ECO:0000256" key="3">
    <source>
        <dbReference type="SAM" id="MobiDB-lite"/>
    </source>
</evidence>
<evidence type="ECO:0000269" key="4">
    <source>
    </source>
</evidence>
<evidence type="ECO:0000269" key="5">
    <source>
    </source>
</evidence>
<evidence type="ECO:0000269" key="6">
    <source>
    </source>
</evidence>
<evidence type="ECO:0000269" key="7">
    <source>
    </source>
</evidence>
<evidence type="ECO:0000269" key="8">
    <source>
    </source>
</evidence>
<evidence type="ECO:0000269" key="9">
    <source>
    </source>
</evidence>
<evidence type="ECO:0000269" key="10">
    <source>
    </source>
</evidence>
<evidence type="ECO:0000269" key="11">
    <source>
    </source>
</evidence>
<evidence type="ECO:0000269" key="12">
    <source>
    </source>
</evidence>
<evidence type="ECO:0000269" key="13">
    <source>
    </source>
</evidence>
<evidence type="ECO:0000269" key="14">
    <source>
    </source>
</evidence>
<evidence type="ECO:0000269" key="15">
    <source>
    </source>
</evidence>
<evidence type="ECO:0000269" key="16">
    <source>
    </source>
</evidence>
<evidence type="ECO:0000269" key="17">
    <source>
    </source>
</evidence>
<evidence type="ECO:0000269" key="18">
    <source>
    </source>
</evidence>
<evidence type="ECO:0000303" key="19">
    <source>
    </source>
</evidence>
<evidence type="ECO:0000303" key="20">
    <source>
    </source>
</evidence>
<evidence type="ECO:0000305" key="21"/>
<evidence type="ECO:0000305" key="22">
    <source>
    </source>
</evidence>
<evidence type="ECO:0000305" key="23">
    <source>
    </source>
</evidence>
<evidence type="ECO:0000312" key="24">
    <source>
        <dbReference type="HGNC" id="HGNC:10922"/>
    </source>
</evidence>
<evidence type="ECO:0007744" key="25">
    <source>
        <dbReference type="PDB" id="6LYY"/>
    </source>
</evidence>
<evidence type="ECO:0007744" key="26">
    <source>
        <dbReference type="PDB" id="6LZ0"/>
    </source>
</evidence>
<evidence type="ECO:0007744" key="27">
    <source>
        <dbReference type="PDB" id="7CKO"/>
    </source>
</evidence>
<evidence type="ECO:0007744" key="28">
    <source>
        <dbReference type="PDB" id="7CKR"/>
    </source>
</evidence>
<evidence type="ECO:0007744" key="29">
    <source>
        <dbReference type="PDB" id="7DA5"/>
    </source>
</evidence>
<evidence type="ECO:0007744" key="30">
    <source>
    </source>
</evidence>
<evidence type="ECO:0007744" key="31">
    <source>
    </source>
</evidence>
<evidence type="ECO:0007744" key="32">
    <source>
    </source>
</evidence>
<evidence type="ECO:0007744" key="33">
    <source>
    </source>
</evidence>
<evidence type="ECO:0007744" key="34">
    <source>
    </source>
</evidence>
<evidence type="ECO:0007744" key="35">
    <source>
    </source>
</evidence>
<evidence type="ECO:0007744" key="36">
    <source>
    </source>
</evidence>
<evidence type="ECO:0007744" key="37">
    <source>
    </source>
</evidence>
<evidence type="ECO:0007744" key="38">
    <source>
    </source>
</evidence>
<evidence type="ECO:0007829" key="39">
    <source>
        <dbReference type="PDB" id="6LYY"/>
    </source>
</evidence>
<evidence type="ECO:0007829" key="40">
    <source>
        <dbReference type="PDB" id="7CKO"/>
    </source>
</evidence>
<evidence type="ECO:0007829" key="41">
    <source>
        <dbReference type="PDB" id="7CKR"/>
    </source>
</evidence>
<evidence type="ECO:0007829" key="42">
    <source>
        <dbReference type="PDB" id="7DA5"/>
    </source>
</evidence>
<proteinExistence type="evidence at protein level"/>
<accession>P53985</accession>
<accession>Q49A45</accession>
<accession>Q5T8R6</accession>
<accession>Q9NSJ9</accession>
<organism>
    <name type="scientific">Homo sapiens</name>
    <name type="common">Human</name>
    <dbReference type="NCBI Taxonomy" id="9606"/>
    <lineage>
        <taxon>Eukaryota</taxon>
        <taxon>Metazoa</taxon>
        <taxon>Chordata</taxon>
        <taxon>Craniata</taxon>
        <taxon>Vertebrata</taxon>
        <taxon>Euteleostomi</taxon>
        <taxon>Mammalia</taxon>
        <taxon>Eutheria</taxon>
        <taxon>Euarchontoglires</taxon>
        <taxon>Primates</taxon>
        <taxon>Haplorrhini</taxon>
        <taxon>Catarrhini</taxon>
        <taxon>Hominidae</taxon>
        <taxon>Homo</taxon>
    </lineage>
</organism>
<keyword id="KW-0002">3D-structure</keyword>
<keyword id="KW-0025">Alternative splicing</keyword>
<keyword id="KW-1003">Cell membrane</keyword>
<keyword id="KW-0225">Disease variant</keyword>
<keyword id="KW-0472">Membrane</keyword>
<keyword id="KW-0597">Phosphoprotein</keyword>
<keyword id="KW-1267">Proteomics identification</keyword>
<keyword id="KW-1185">Reference proteome</keyword>
<keyword id="KW-0769">Symport</keyword>
<keyword id="KW-0812">Transmembrane</keyword>
<keyword id="KW-1133">Transmembrane helix</keyword>
<keyword id="KW-0813">Transport</keyword>
<reference key="1">
    <citation type="journal article" date="1994" name="Genomics">
        <title>cDNA cloning of the human monocarboxylate transporter 1 and chromosomal localization of the SLC16A1 locus to 1p13.2-p12.</title>
        <authorList>
            <person name="Garcia C.K."/>
            <person name="Li X."/>
            <person name="Luna J."/>
            <person name="Francke U."/>
        </authorList>
    </citation>
    <scope>NUCLEOTIDE SEQUENCE [MRNA] (ISOFORM 1)</scope>
    <scope>VARIANT GLU-490</scope>
    <source>
        <tissue>Heart</tissue>
    </source>
</reference>
<reference key="2">
    <citation type="journal article" date="2002" name="Biochem. Biophys. Res. Commun.">
        <title>The human monocarboxylate transporter, MCT1: genomic organization and promoter analysis.</title>
        <authorList>
            <person name="Cuff M.A."/>
            <person name="Shirazi-Beechey S.P."/>
        </authorList>
    </citation>
    <scope>NUCLEOTIDE SEQUENCE [GENOMIC DNA]</scope>
    <source>
        <tissue>Colon</tissue>
    </source>
</reference>
<reference key="3">
    <citation type="journal article" date="2007" name="BMC Genomics">
        <title>The full-ORF clone resource of the German cDNA consortium.</title>
        <authorList>
            <person name="Bechtel S."/>
            <person name="Rosenfelder H."/>
            <person name="Duda A."/>
            <person name="Schmidt C.P."/>
            <person name="Ernst U."/>
            <person name="Wellenreuther R."/>
            <person name="Mehrle A."/>
            <person name="Schuster C."/>
            <person name="Bahr A."/>
            <person name="Bloecker H."/>
            <person name="Heubner D."/>
            <person name="Hoerlein A."/>
            <person name="Michel G."/>
            <person name="Wedler H."/>
            <person name="Koehrer K."/>
            <person name="Ottenwaelder B."/>
            <person name="Poustka A."/>
            <person name="Wiemann S."/>
            <person name="Schupp I."/>
        </authorList>
    </citation>
    <scope>NUCLEOTIDE SEQUENCE [LARGE SCALE MRNA] (ISOFORM 1)</scope>
    <scope>VARIANT GLU-490</scope>
    <source>
        <tissue>Melanoma</tissue>
    </source>
</reference>
<reference key="4">
    <citation type="journal article" date="2006" name="Nature">
        <title>The DNA sequence and biological annotation of human chromosome 1.</title>
        <authorList>
            <person name="Gregory S.G."/>
            <person name="Barlow K.F."/>
            <person name="McLay K.E."/>
            <person name="Kaul R."/>
            <person name="Swarbreck D."/>
            <person name="Dunham A."/>
            <person name="Scott C.E."/>
            <person name="Howe K.L."/>
            <person name="Woodfine K."/>
            <person name="Spencer C.C.A."/>
            <person name="Jones M.C."/>
            <person name="Gillson C."/>
            <person name="Searle S."/>
            <person name="Zhou Y."/>
            <person name="Kokocinski F."/>
            <person name="McDonald L."/>
            <person name="Evans R."/>
            <person name="Phillips K."/>
            <person name="Atkinson A."/>
            <person name="Cooper R."/>
            <person name="Jones C."/>
            <person name="Hall R.E."/>
            <person name="Andrews T.D."/>
            <person name="Lloyd C."/>
            <person name="Ainscough R."/>
            <person name="Almeida J.P."/>
            <person name="Ambrose K.D."/>
            <person name="Anderson F."/>
            <person name="Andrew R.W."/>
            <person name="Ashwell R.I.S."/>
            <person name="Aubin K."/>
            <person name="Babbage A.K."/>
            <person name="Bagguley C.L."/>
            <person name="Bailey J."/>
            <person name="Beasley H."/>
            <person name="Bethel G."/>
            <person name="Bird C.P."/>
            <person name="Bray-Allen S."/>
            <person name="Brown J.Y."/>
            <person name="Brown A.J."/>
            <person name="Buckley D."/>
            <person name="Burton J."/>
            <person name="Bye J."/>
            <person name="Carder C."/>
            <person name="Chapman J.C."/>
            <person name="Clark S.Y."/>
            <person name="Clarke G."/>
            <person name="Clee C."/>
            <person name="Cobley V."/>
            <person name="Collier R.E."/>
            <person name="Corby N."/>
            <person name="Coville G.J."/>
            <person name="Davies J."/>
            <person name="Deadman R."/>
            <person name="Dunn M."/>
            <person name="Earthrowl M."/>
            <person name="Ellington A.G."/>
            <person name="Errington H."/>
            <person name="Frankish A."/>
            <person name="Frankland J."/>
            <person name="French L."/>
            <person name="Garner P."/>
            <person name="Garnett J."/>
            <person name="Gay L."/>
            <person name="Ghori M.R.J."/>
            <person name="Gibson R."/>
            <person name="Gilby L.M."/>
            <person name="Gillett W."/>
            <person name="Glithero R.J."/>
            <person name="Grafham D.V."/>
            <person name="Griffiths C."/>
            <person name="Griffiths-Jones S."/>
            <person name="Grocock R."/>
            <person name="Hammond S."/>
            <person name="Harrison E.S.I."/>
            <person name="Hart E."/>
            <person name="Haugen E."/>
            <person name="Heath P.D."/>
            <person name="Holmes S."/>
            <person name="Holt K."/>
            <person name="Howden P.J."/>
            <person name="Hunt A.R."/>
            <person name="Hunt S.E."/>
            <person name="Hunter G."/>
            <person name="Isherwood J."/>
            <person name="James R."/>
            <person name="Johnson C."/>
            <person name="Johnson D."/>
            <person name="Joy A."/>
            <person name="Kay M."/>
            <person name="Kershaw J.K."/>
            <person name="Kibukawa M."/>
            <person name="Kimberley A.M."/>
            <person name="King A."/>
            <person name="Knights A.J."/>
            <person name="Lad H."/>
            <person name="Laird G."/>
            <person name="Lawlor S."/>
            <person name="Leongamornlert D.A."/>
            <person name="Lloyd D.M."/>
            <person name="Loveland J."/>
            <person name="Lovell J."/>
            <person name="Lush M.J."/>
            <person name="Lyne R."/>
            <person name="Martin S."/>
            <person name="Mashreghi-Mohammadi M."/>
            <person name="Matthews L."/>
            <person name="Matthews N.S.W."/>
            <person name="McLaren S."/>
            <person name="Milne S."/>
            <person name="Mistry S."/>
            <person name="Moore M.J.F."/>
            <person name="Nickerson T."/>
            <person name="O'Dell C.N."/>
            <person name="Oliver K."/>
            <person name="Palmeiri A."/>
            <person name="Palmer S.A."/>
            <person name="Parker A."/>
            <person name="Patel D."/>
            <person name="Pearce A.V."/>
            <person name="Peck A.I."/>
            <person name="Pelan S."/>
            <person name="Phelps K."/>
            <person name="Phillimore B.J."/>
            <person name="Plumb R."/>
            <person name="Rajan J."/>
            <person name="Raymond C."/>
            <person name="Rouse G."/>
            <person name="Saenphimmachak C."/>
            <person name="Sehra H.K."/>
            <person name="Sheridan E."/>
            <person name="Shownkeen R."/>
            <person name="Sims S."/>
            <person name="Skuce C.D."/>
            <person name="Smith M."/>
            <person name="Steward C."/>
            <person name="Subramanian S."/>
            <person name="Sycamore N."/>
            <person name="Tracey A."/>
            <person name="Tromans A."/>
            <person name="Van Helmond Z."/>
            <person name="Wall M."/>
            <person name="Wallis J.M."/>
            <person name="White S."/>
            <person name="Whitehead S.L."/>
            <person name="Wilkinson J.E."/>
            <person name="Willey D.L."/>
            <person name="Williams H."/>
            <person name="Wilming L."/>
            <person name="Wray P.W."/>
            <person name="Wu Z."/>
            <person name="Coulson A."/>
            <person name="Vaudin M."/>
            <person name="Sulston J.E."/>
            <person name="Durbin R.M."/>
            <person name="Hubbard T."/>
            <person name="Wooster R."/>
            <person name="Dunham I."/>
            <person name="Carter N.P."/>
            <person name="McVean G."/>
            <person name="Ross M.T."/>
            <person name="Harrow J."/>
            <person name="Olson M.V."/>
            <person name="Beck S."/>
            <person name="Rogers J."/>
            <person name="Bentley D.R."/>
        </authorList>
    </citation>
    <scope>NUCLEOTIDE SEQUENCE [LARGE SCALE GENOMIC DNA]</scope>
</reference>
<reference key="5">
    <citation type="submission" date="2005-07" db="EMBL/GenBank/DDBJ databases">
        <authorList>
            <person name="Mural R.J."/>
            <person name="Istrail S."/>
            <person name="Sutton G.G."/>
            <person name="Florea L."/>
            <person name="Halpern A.L."/>
            <person name="Mobarry C.M."/>
            <person name="Lippert R."/>
            <person name="Walenz B."/>
            <person name="Shatkay H."/>
            <person name="Dew I."/>
            <person name="Miller J.R."/>
            <person name="Flanigan M.J."/>
            <person name="Edwards N.J."/>
            <person name="Bolanos R."/>
            <person name="Fasulo D."/>
            <person name="Halldorsson B.V."/>
            <person name="Hannenhalli S."/>
            <person name="Turner R."/>
            <person name="Yooseph S."/>
            <person name="Lu F."/>
            <person name="Nusskern D.R."/>
            <person name="Shue B.C."/>
            <person name="Zheng X.H."/>
            <person name="Zhong F."/>
            <person name="Delcher A.L."/>
            <person name="Huson D.H."/>
            <person name="Kravitz S.A."/>
            <person name="Mouchard L."/>
            <person name="Reinert K."/>
            <person name="Remington K.A."/>
            <person name="Clark A.G."/>
            <person name="Waterman M.S."/>
            <person name="Eichler E.E."/>
            <person name="Adams M.D."/>
            <person name="Hunkapiller M.W."/>
            <person name="Myers E.W."/>
            <person name="Venter J.C."/>
        </authorList>
    </citation>
    <scope>NUCLEOTIDE SEQUENCE [LARGE SCALE GENOMIC DNA]</scope>
</reference>
<reference key="6">
    <citation type="journal article" date="2004" name="Genome Res.">
        <title>The status, quality, and expansion of the NIH full-length cDNA project: the Mammalian Gene Collection (MGC).</title>
        <authorList>
            <consortium name="The MGC Project Team"/>
        </authorList>
    </citation>
    <scope>NUCLEOTIDE SEQUENCE [LARGE SCALE MRNA] (ISOFORMS 1 AND 2)</scope>
    <source>
        <tissue>Brain</tissue>
        <tissue>Testis</tissue>
    </source>
</reference>
<reference key="7">
    <citation type="journal article" date="2000" name="EMBO J.">
        <title>CD147 is tightly associated with lactate transporters MCT1 and MCT4 and facilitates their cell surface expression.</title>
        <authorList>
            <person name="Kirk P."/>
            <person name="Wilson M.C."/>
            <person name="Heddle C."/>
            <person name="Brown M.H."/>
            <person name="Barclay A.N."/>
            <person name="Halestrap A.P."/>
        </authorList>
    </citation>
    <scope>INTERACTION WITH BSG</scope>
    <scope>SUBCELLULAR LOCATION</scope>
</reference>
<reference key="8">
    <citation type="journal article" date="2002" name="Muscle Nerve">
        <title>Relative distribution of three major lactate transporters in frozen human tissues and their localization in unfixed skeletal muscle.</title>
        <authorList>
            <person name="Fishbein W.N."/>
            <person name="Merezhinskaya N."/>
            <person name="Foellmer J.W."/>
        </authorList>
    </citation>
    <scope>TISSUE SPECIFICITY</scope>
</reference>
<reference key="9">
    <citation type="journal article" date="2003" name="Biochem. J.">
        <title>The loop between helix 4 and helix 5 in the monocarboxylate transporter MCT1 is important for substrate selection and protein stability.</title>
        <authorList>
            <person name="Galic S."/>
            <person name="Schneider H.P."/>
            <person name="Broeer A."/>
            <person name="Deitmer J.W."/>
            <person name="Broeer S."/>
        </authorList>
    </citation>
    <scope>FUNCTION</scope>
    <scope>TRANSPORTER ACTIVITY</scope>
    <scope>BIOPHYSICOCHEMICAL PROPERTIES</scope>
    <scope>MUTAGENESIS OF ARG-143 AND GLY-153</scope>
    <scope>SUBCELLULAR LOCATION</scope>
</reference>
<reference key="10">
    <citation type="journal article" date="2004" name="J. Histochem. Cytochem.">
        <title>Presence and localization of three lactic acid transporters (MCT1, -2, and -4) in separated human granulocytes, lymphocytes, and monocytes.</title>
        <authorList>
            <person name="Merezhinskaya N."/>
            <person name="Ogunwuyi S.A."/>
            <person name="Mullick F.G."/>
            <person name="Fishbein W.N."/>
        </authorList>
    </citation>
    <scope>SUBCELLULAR LOCATION</scope>
    <scope>TISSUE SPECIFICITY</scope>
</reference>
<reference key="11">
    <citation type="journal article" date="2005" name="Am. J. Physiol.">
        <title>Expression and membrane localization of MCT isoforms along the length of the human intestine.</title>
        <authorList>
            <person name="Gill R.K."/>
            <person name="Saksena S."/>
            <person name="Alrefai W.A."/>
            <person name="Sarwar Z."/>
            <person name="Goldstein J.L."/>
            <person name="Carroll R.E."/>
            <person name="Ramaswamy K."/>
            <person name="Dudeja P.K."/>
        </authorList>
    </citation>
    <scope>SUBCELLULAR LOCATION</scope>
    <scope>TISSUE SPECIFICITY</scope>
</reference>
<reference key="12">
    <citation type="journal article" date="2006" name="Cell">
        <title>Global, in vivo, and site-specific phosphorylation dynamics in signaling networks.</title>
        <authorList>
            <person name="Olsen J.V."/>
            <person name="Blagoev B."/>
            <person name="Gnad F."/>
            <person name="Macek B."/>
            <person name="Kumar C."/>
            <person name="Mortensen P."/>
            <person name="Mann M."/>
        </authorList>
    </citation>
    <scope>PHOSPHORYLATION [LARGE SCALE ANALYSIS] AT SER-213 AND SER-498</scope>
    <scope>VARIANT [LARGE SCALE ANALYSIS] GLU-490</scope>
    <scope>IDENTIFICATION BY MASS SPECTROMETRY [LARGE SCALE ANALYSIS]</scope>
    <source>
        <tissue>Cervix carcinoma</tissue>
    </source>
</reference>
<reference key="13">
    <citation type="journal article" date="2006" name="Mol. Membr. Biol.">
        <title>The role of charged residues in the transmembrane helices of monocarboxylate transporter 1 and its ancillary protein basigin in determining plasma membrane expression and catalytic activity.</title>
        <authorList>
            <person name="Manoharan C."/>
            <person name="Wilson M.C."/>
            <person name="Sessions R.B."/>
            <person name="Halestrap A.P."/>
        </authorList>
    </citation>
    <scope>INTERACTION WITH BSG</scope>
    <scope>SUBCELLULAR LOCATION</scope>
</reference>
<reference key="14">
    <citation type="journal article" date="2008" name="Mol. Cell">
        <title>Kinase-selective enrichment enables quantitative phosphoproteomics of the kinome across the cell cycle.</title>
        <authorList>
            <person name="Daub H."/>
            <person name="Olsen J.V."/>
            <person name="Bairlein M."/>
            <person name="Gnad F."/>
            <person name="Oppermann F.S."/>
            <person name="Korner R."/>
            <person name="Greff Z."/>
            <person name="Keri G."/>
            <person name="Stemmann O."/>
            <person name="Mann M."/>
        </authorList>
    </citation>
    <scope>PHOSPHORYLATION [LARGE SCALE ANALYSIS] AT SER-461 AND SER-498</scope>
    <scope>VARIANT [LARGE SCALE ANALYSIS] GLU-490</scope>
    <scope>IDENTIFICATION BY MASS SPECTROMETRY [LARGE SCALE ANALYSIS]</scope>
    <source>
        <tissue>Cervix carcinoma</tissue>
    </source>
</reference>
<reference key="15">
    <citation type="journal article" date="2008" name="Proc. Natl. Acad. Sci. U.S.A.">
        <title>A quantitative atlas of mitotic phosphorylation.</title>
        <authorList>
            <person name="Dephoure N."/>
            <person name="Zhou C."/>
            <person name="Villen J."/>
            <person name="Beausoleil S.A."/>
            <person name="Bakalarski C.E."/>
            <person name="Elledge S.J."/>
            <person name="Gygi S.P."/>
        </authorList>
    </citation>
    <scope>PHOSPHORYLATION [LARGE SCALE ANALYSIS] AT SER-461; SER-467; SER-483 AND SER-498</scope>
    <scope>VARIANT [LARGE SCALE ANALYSIS] GLU-490</scope>
    <scope>IDENTIFICATION BY MASS SPECTROMETRY [LARGE SCALE ANALYSIS]</scope>
    <source>
        <tissue>Cervix carcinoma</tissue>
    </source>
</reference>
<reference key="16">
    <citation type="journal article" date="2009" name="Anal. Chem.">
        <title>Lys-N and trypsin cover complementary parts of the phosphoproteome in a refined SCX-based approach.</title>
        <authorList>
            <person name="Gauci S."/>
            <person name="Helbig A.O."/>
            <person name="Slijper M."/>
            <person name="Krijgsveld J."/>
            <person name="Heck A.J."/>
            <person name="Mohammed S."/>
        </authorList>
    </citation>
    <scope>IDENTIFICATION BY MASS SPECTROMETRY [LARGE SCALE ANALYSIS]</scope>
</reference>
<reference key="17">
    <citation type="journal article" date="2009" name="Mol. Cell. Proteomics">
        <title>Large-scale proteomics analysis of the human kinome.</title>
        <authorList>
            <person name="Oppermann F.S."/>
            <person name="Gnad F."/>
            <person name="Olsen J.V."/>
            <person name="Hornberger R."/>
            <person name="Greff Z."/>
            <person name="Keri G."/>
            <person name="Mann M."/>
            <person name="Daub H."/>
        </authorList>
    </citation>
    <scope>PHOSPHORYLATION [LARGE SCALE ANALYSIS] AT SER-461</scope>
    <scope>IDENTIFICATION BY MASS SPECTROMETRY [LARGE SCALE ANALYSIS]</scope>
</reference>
<reference key="18">
    <citation type="journal article" date="2010" name="Sci. Signal.">
        <title>Quantitative phosphoproteomics reveals widespread full phosphorylation site occupancy during mitosis.</title>
        <authorList>
            <person name="Olsen J.V."/>
            <person name="Vermeulen M."/>
            <person name="Santamaria A."/>
            <person name="Kumar C."/>
            <person name="Miller M.L."/>
            <person name="Jensen L.J."/>
            <person name="Gnad F."/>
            <person name="Cox J."/>
            <person name="Jensen T.S."/>
            <person name="Nigg E.A."/>
            <person name="Brunak S."/>
            <person name="Mann M."/>
        </authorList>
    </citation>
    <scope>PHOSPHORYLATION [LARGE SCALE ANALYSIS] AT SER-213; SER-483 AND SER-498</scope>
    <scope>VARIANT [LARGE SCALE ANALYSIS] GLU-490</scope>
    <scope>IDENTIFICATION BY MASS SPECTROMETRY [LARGE SCALE ANALYSIS]</scope>
    <source>
        <tissue>Cervix carcinoma</tissue>
    </source>
</reference>
<reference key="19">
    <citation type="journal article" date="2011" name="Sci. Signal.">
        <title>System-wide temporal characterization of the proteome and phosphoproteome of human embryonic stem cell differentiation.</title>
        <authorList>
            <person name="Rigbolt K.T."/>
            <person name="Prokhorova T.A."/>
            <person name="Akimov V."/>
            <person name="Henningsen J."/>
            <person name="Johansen P.T."/>
            <person name="Kratchmarova I."/>
            <person name="Kassem M."/>
            <person name="Mann M."/>
            <person name="Olsen J.V."/>
            <person name="Blagoev B."/>
        </authorList>
    </citation>
    <scope>PHOSPHORYLATION [LARGE SCALE ANALYSIS] AT SER-213; THR-466; SER-483 AND SER-498</scope>
    <scope>VARIANT [LARGE SCALE ANALYSIS] GLU-490</scope>
    <scope>IDENTIFICATION BY MASS SPECTROMETRY [LARGE SCALE ANALYSIS]</scope>
</reference>
<reference key="20">
    <citation type="journal article" date="2013" name="J. Proteome Res.">
        <title>Toward a comprehensive characterization of a human cancer cell phosphoproteome.</title>
        <authorList>
            <person name="Zhou H."/>
            <person name="Di Palma S."/>
            <person name="Preisinger C."/>
            <person name="Peng M."/>
            <person name="Polat A.N."/>
            <person name="Heck A.J."/>
            <person name="Mohammed S."/>
        </authorList>
    </citation>
    <scope>PHOSPHORYLATION [LARGE SCALE ANALYSIS] AT SER-461; THR-466; SER-467; SER-483 AND SER-498</scope>
    <scope>VARIANT [LARGE SCALE ANALYSIS] GLU-490</scope>
    <scope>IDENTIFICATION BY MASS SPECTROMETRY [LARGE SCALE ANALYSIS]</scope>
    <source>
        <tissue>Cervix carcinoma</tissue>
        <tissue>Erythroleukemia</tissue>
    </source>
</reference>
<reference key="21">
    <citation type="journal article" date="2014" name="J. Proteomics">
        <title>An enzyme assisted RP-RPLC approach for in-depth analysis of human liver phosphoproteome.</title>
        <authorList>
            <person name="Bian Y."/>
            <person name="Song C."/>
            <person name="Cheng K."/>
            <person name="Dong M."/>
            <person name="Wang F."/>
            <person name="Huang J."/>
            <person name="Sun D."/>
            <person name="Wang L."/>
            <person name="Ye M."/>
            <person name="Zou H."/>
        </authorList>
    </citation>
    <scope>PHOSPHORYLATION [LARGE SCALE ANALYSIS] AT SER-467 AND SER-498</scope>
    <scope>IDENTIFICATION BY MASS SPECTROMETRY [LARGE SCALE ANALYSIS]</scope>
    <source>
        <tissue>Liver</tissue>
    </source>
</reference>
<reference key="22">
    <citation type="journal article" date="2014" name="N. Engl. J. Med.">
        <title>Monocarboxylate transporter 1 deficiency and ketone utilization.</title>
        <authorList>
            <person name="van Hasselt P.M."/>
            <person name="Ferdinandusse S."/>
            <person name="Monroe G.R."/>
            <person name="Ruiter J.P."/>
            <person name="Turkenburg M."/>
            <person name="Geerlings M.J."/>
            <person name="Duran K."/>
            <person name="Harakalova M."/>
            <person name="van der Zwaag B."/>
            <person name="Monavari A.A."/>
            <person name="Okur I."/>
            <person name="Sharrard M.J."/>
            <person name="Cleary M."/>
            <person name="O'Connell N."/>
            <person name="Walker V."/>
            <person name="Rubio-Gozalbo M.E."/>
            <person name="de Vries M.C."/>
            <person name="Visser G."/>
            <person name="Houwen R.H."/>
            <person name="van der Smagt J.J."/>
            <person name="Verhoeven-Duif N.M."/>
            <person name="Wanders R.J."/>
            <person name="van Haaften G."/>
        </authorList>
    </citation>
    <scope>INVOLVEMENT IN MCT1D</scope>
    <scope>VARIANT MCT1D GLN-313</scope>
</reference>
<reference key="23">
    <citation type="journal article" date="2014" name="Nature">
        <title>Sequence variants in SLC16A11 are a common risk factor for type 2 diabetes in Mexico.</title>
        <authorList>
            <consortium name="The SIGMA Type 2 Diabetes Consortium"/>
        </authorList>
    </citation>
    <scope>SUBCELLULAR LOCATION</scope>
</reference>
<reference key="24">
    <citation type="journal article" date="2015" name="Cell">
        <title>Rod-derived cone viability factor promotes cone survival by stimulating aerobic glycolysis.</title>
        <authorList>
            <person name="Ait-Ali N."/>
            <person name="Fridlich R."/>
            <person name="Millet-Puel G."/>
            <person name="Clerin E."/>
            <person name="Delalande F."/>
            <person name="Jaillard C."/>
            <person name="Blond F."/>
            <person name="Perrocheau L."/>
            <person name="Reichman S."/>
            <person name="Byrne L.C."/>
            <person name="Olivier-Bandini A."/>
            <person name="Bellalou J."/>
            <person name="Moyse E."/>
            <person name="Bouillaud F."/>
            <person name="Nicol X."/>
            <person name="Dalkara D."/>
            <person name="van Dorsselaer A."/>
            <person name="Sahel J.A."/>
            <person name="Leveillard T."/>
        </authorList>
    </citation>
    <scope>INTERACTION WITH BSG</scope>
    <scope>SUBCELLULAR LOCATION</scope>
</reference>
<reference key="25">
    <citation type="journal article" date="2015" name="Proteomics">
        <title>N-terminome analysis of the human mitochondrial proteome.</title>
        <authorList>
            <person name="Vaca Jacome A.S."/>
            <person name="Rabilloud T."/>
            <person name="Schaeffer-Reiss C."/>
            <person name="Rompais M."/>
            <person name="Ayoub D."/>
            <person name="Lane L."/>
            <person name="Bairoch A."/>
            <person name="Van Dorsselaer A."/>
            <person name="Carapito C."/>
        </authorList>
    </citation>
    <scope>IDENTIFICATION BY MASS SPECTROMETRY [LARGE SCALE ANALYSIS]</scope>
</reference>
<reference key="26">
    <citation type="journal article" date="2000" name="Muscle Nerve">
        <title>Mutations in MCT1 cDNA in patients with symptomatic deficiency in lactate transport.</title>
        <authorList>
            <person name="Merezhinskaya N."/>
            <person name="Fishbein W.N."/>
            <person name="Davis J.I."/>
            <person name="Foellmer J.W."/>
        </authorList>
    </citation>
    <scope>VARIANTS SDLT GLU-204 AND ARG-472</scope>
    <scope>VARIANT GLU-490</scope>
</reference>
<reference key="27">
    <citation type="journal article" date="2007" name="Am. J. Hum. Genet.">
        <title>Physical exercise-induced hypoglycemia caused by failed silencing of monocarboxylate transporter 1 in pancreatic beta cells.</title>
        <authorList>
            <person name="Otonkoski T."/>
            <person name="Jiao H."/>
            <person name="Kaminen-Ahola N."/>
            <person name="Tapia-Paez I."/>
            <person name="Ullah M.S."/>
            <person name="Parton L.E."/>
            <person name="Schuit F."/>
            <person name="Quintens R."/>
            <person name="Sipilae I."/>
            <person name="Mayatepek E."/>
            <person name="Meissner T."/>
            <person name="Halestrap A.P."/>
            <person name="Rutter G.A."/>
            <person name="Kere J."/>
        </authorList>
    </citation>
    <scope>INVOLVEMENT IN HHF7</scope>
</reference>
<reference key="28">
    <citation type="journal article" date="2011" name="BMC Syst. Biol.">
        <title>Initial characterization of the human central proteome.</title>
        <authorList>
            <person name="Burkard T.R."/>
            <person name="Planyavsky M."/>
            <person name="Kaupe I."/>
            <person name="Breitwieser F.P."/>
            <person name="Buerckstuemmer T."/>
            <person name="Bennett K.L."/>
            <person name="Superti-Furga G."/>
            <person name="Colinge J."/>
        </authorList>
    </citation>
    <scope>VARIANT [LARGE SCALE ANALYSIS] GLU-490</scope>
    <scope>IDENTIFICATION BY MASS SPECTROMETRY [LARGE SCALE ANALYSIS]</scope>
</reference>
<reference key="29">
    <citation type="journal article" date="2020" name="Cell">
        <title>pH-gated succinate secretion regulates muscle remodeling in response to exercise.</title>
        <authorList>
            <person name="Reddy A."/>
            <person name="Bozi L.H.M."/>
            <person name="Yaghi O.K."/>
            <person name="Mills E.L."/>
            <person name="Xiao H."/>
            <person name="Nicholson H.E."/>
            <person name="Paschini M."/>
            <person name="Paulo J.A."/>
            <person name="Garrity R."/>
            <person name="Laznik-Bogoslavski D."/>
            <person name="Ferreira J.C.B."/>
            <person name="Carl C.S."/>
            <person name="Sjoeberg K.A."/>
            <person name="Wojtaszewski J.F.P."/>
            <person name="Jeppesen J.F."/>
            <person name="Kiens B."/>
            <person name="Gygi S.P."/>
            <person name="Richter E.A."/>
            <person name="Mathis D."/>
            <person name="Chouchani E.T."/>
        </authorList>
    </citation>
    <scope>FUNCTION</scope>
    <scope>TRANSPORTER ACTIVITY</scope>
</reference>
<reference evidence="25 26 27 28 29" key="30">
    <citation type="journal article" date="2021" name="Cell">
        <title>Structural basis of human monocarboxylate transporter 1 inhibition by anti-cancer drug candidates.</title>
        <authorList>
            <person name="Wang N."/>
            <person name="Jiang X."/>
            <person name="Zhang S."/>
            <person name="Zhu A."/>
            <person name="Yuan Y."/>
            <person name="Xu H."/>
            <person name="Lei J."/>
            <person name="Yan C."/>
        </authorList>
    </citation>
    <scope>STRUCTURE BY ELECTRON MICROSCOPY (2.95 ANGSTROMS) IN COMPLEXES WITH BSG; LACTATE AND INHIBITORS</scope>
    <scope>FUNCTION</scope>
    <scope>TRANSPORTER ACTIVITY</scope>
    <scope>SUBUNIT</scope>
    <scope>MUTAGENESIS OF TYR-34; LYS-38; TYR-70; MET-151; ASN-187; LEU-281; ASP-309; ARG-313; PHE-367 AND SER-371</scope>
    <scope>CHARACTERIZATION OF VARIANT MCT1D GLN-313</scope>
    <scope>ACTIVITY REGULATION</scope>
</reference>